<reference key="1">
    <citation type="journal article" date="2006" name="J. Bacteriol.">
        <title>Complete genome sequence of Yersinia pestis strains Antiqua and Nepal516: evidence of gene reduction in an emerging pathogen.</title>
        <authorList>
            <person name="Chain P.S.G."/>
            <person name="Hu P."/>
            <person name="Malfatti S.A."/>
            <person name="Radnedge L."/>
            <person name="Larimer F."/>
            <person name="Vergez L.M."/>
            <person name="Worsham P."/>
            <person name="Chu M.C."/>
            <person name="Andersen G.L."/>
        </authorList>
    </citation>
    <scope>NUCLEOTIDE SEQUENCE [LARGE SCALE GENOMIC DNA]</scope>
    <source>
        <strain>Nepal516</strain>
    </source>
</reference>
<reference key="2">
    <citation type="submission" date="2009-04" db="EMBL/GenBank/DDBJ databases">
        <title>Yersinia pestis Nepal516A whole genome shotgun sequencing project.</title>
        <authorList>
            <person name="Plunkett G. III"/>
            <person name="Anderson B.D."/>
            <person name="Baumler D.J."/>
            <person name="Burland V."/>
            <person name="Cabot E.L."/>
            <person name="Glasner J.D."/>
            <person name="Mau B."/>
            <person name="Neeno-Eckwall E."/>
            <person name="Perna N.T."/>
            <person name="Munk A.C."/>
            <person name="Tapia R."/>
            <person name="Green L.D."/>
            <person name="Rogers Y.C."/>
            <person name="Detter J.C."/>
            <person name="Bruce D.C."/>
            <person name="Brettin T.S."/>
        </authorList>
    </citation>
    <scope>NUCLEOTIDE SEQUENCE [LARGE SCALE GENOMIC DNA]</scope>
    <source>
        <strain>Nepal516</strain>
    </source>
</reference>
<accession>Q1CNC6</accession>
<accession>D1Q163</accession>
<organism>
    <name type="scientific">Yersinia pestis bv. Antiqua (strain Nepal516)</name>
    <dbReference type="NCBI Taxonomy" id="377628"/>
    <lineage>
        <taxon>Bacteria</taxon>
        <taxon>Pseudomonadati</taxon>
        <taxon>Pseudomonadota</taxon>
        <taxon>Gammaproteobacteria</taxon>
        <taxon>Enterobacterales</taxon>
        <taxon>Yersiniaceae</taxon>
        <taxon>Yersinia</taxon>
    </lineage>
</organism>
<dbReference type="EC" id="7.6.2.10" evidence="1"/>
<dbReference type="EMBL" id="CP000305">
    <property type="protein sequence ID" value="ABG16504.1"/>
    <property type="molecule type" value="Genomic_DNA"/>
</dbReference>
<dbReference type="EMBL" id="ACNQ01000001">
    <property type="protein sequence ID" value="EEO78617.1"/>
    <property type="molecule type" value="Genomic_DNA"/>
</dbReference>
<dbReference type="RefSeq" id="WP_002211523.1">
    <property type="nucleotide sequence ID" value="NZ_ACNQ01000001.1"/>
</dbReference>
<dbReference type="SMR" id="Q1CNC6"/>
<dbReference type="KEGG" id="ypn:YPN_0171"/>
<dbReference type="HOGENOM" id="CLU_000604_1_1_6"/>
<dbReference type="Proteomes" id="UP000008936">
    <property type="component" value="Chromosome"/>
</dbReference>
<dbReference type="GO" id="GO:0055052">
    <property type="term" value="C:ATP-binding cassette (ABC) transporter complex, substrate-binding subunit-containing"/>
    <property type="evidence" value="ECO:0007669"/>
    <property type="project" value="TreeGrafter"/>
</dbReference>
<dbReference type="GO" id="GO:0015430">
    <property type="term" value="F:ABC-type glycerol-3-phosphate transporter activity"/>
    <property type="evidence" value="ECO:0007669"/>
    <property type="project" value="UniProtKB-EC"/>
</dbReference>
<dbReference type="GO" id="GO:0005524">
    <property type="term" value="F:ATP binding"/>
    <property type="evidence" value="ECO:0007669"/>
    <property type="project" value="UniProtKB-KW"/>
</dbReference>
<dbReference type="GO" id="GO:0016887">
    <property type="term" value="F:ATP hydrolysis activity"/>
    <property type="evidence" value="ECO:0007669"/>
    <property type="project" value="InterPro"/>
</dbReference>
<dbReference type="GO" id="GO:0008643">
    <property type="term" value="P:carbohydrate transport"/>
    <property type="evidence" value="ECO:0007669"/>
    <property type="project" value="InterPro"/>
</dbReference>
<dbReference type="GO" id="GO:0001407">
    <property type="term" value="P:glycerophosphodiester transmembrane transport"/>
    <property type="evidence" value="ECO:0007669"/>
    <property type="project" value="TreeGrafter"/>
</dbReference>
<dbReference type="CDD" id="cd03301">
    <property type="entry name" value="ABC_MalK_N"/>
    <property type="match status" value="1"/>
</dbReference>
<dbReference type="FunFam" id="3.40.50.300:FF:000042">
    <property type="entry name" value="Maltose/maltodextrin ABC transporter, ATP-binding protein"/>
    <property type="match status" value="1"/>
</dbReference>
<dbReference type="FunFam" id="2.40.50.100:FF:000032">
    <property type="entry name" value="sn-glycerol-3-phosphate import ATP-binding protein UgpC"/>
    <property type="match status" value="1"/>
</dbReference>
<dbReference type="Gene3D" id="2.40.50.100">
    <property type="match status" value="1"/>
</dbReference>
<dbReference type="Gene3D" id="2.40.50.140">
    <property type="entry name" value="Nucleic acid-binding proteins"/>
    <property type="match status" value="1"/>
</dbReference>
<dbReference type="Gene3D" id="3.40.50.300">
    <property type="entry name" value="P-loop containing nucleotide triphosphate hydrolases"/>
    <property type="match status" value="1"/>
</dbReference>
<dbReference type="InterPro" id="IPR003593">
    <property type="entry name" value="AAA+_ATPase"/>
</dbReference>
<dbReference type="InterPro" id="IPR003439">
    <property type="entry name" value="ABC_transporter-like_ATP-bd"/>
</dbReference>
<dbReference type="InterPro" id="IPR017871">
    <property type="entry name" value="ABC_transporter-like_CS"/>
</dbReference>
<dbReference type="InterPro" id="IPR015855">
    <property type="entry name" value="ABC_transpr_MalK-like"/>
</dbReference>
<dbReference type="InterPro" id="IPR047641">
    <property type="entry name" value="ABC_transpr_MalK/UgpC-like"/>
</dbReference>
<dbReference type="InterPro" id="IPR008995">
    <property type="entry name" value="Mo/tungstate-bd_C_term_dom"/>
</dbReference>
<dbReference type="InterPro" id="IPR012340">
    <property type="entry name" value="NA-bd_OB-fold"/>
</dbReference>
<dbReference type="InterPro" id="IPR040582">
    <property type="entry name" value="OB_MalK-like"/>
</dbReference>
<dbReference type="InterPro" id="IPR027417">
    <property type="entry name" value="P-loop_NTPase"/>
</dbReference>
<dbReference type="NCBIfam" id="NF008653">
    <property type="entry name" value="PRK11650.1"/>
    <property type="match status" value="1"/>
</dbReference>
<dbReference type="PANTHER" id="PTHR43875">
    <property type="entry name" value="MALTODEXTRIN IMPORT ATP-BINDING PROTEIN MSMX"/>
    <property type="match status" value="1"/>
</dbReference>
<dbReference type="PANTHER" id="PTHR43875:SF12">
    <property type="entry name" value="SN-GLYCEROL-3-PHOSPHATE IMPORT ATP-BINDING PROTEIN UGPC"/>
    <property type="match status" value="1"/>
</dbReference>
<dbReference type="Pfam" id="PF00005">
    <property type="entry name" value="ABC_tran"/>
    <property type="match status" value="1"/>
</dbReference>
<dbReference type="Pfam" id="PF17912">
    <property type="entry name" value="OB_MalK"/>
    <property type="match status" value="1"/>
</dbReference>
<dbReference type="SMART" id="SM00382">
    <property type="entry name" value="AAA"/>
    <property type="match status" value="1"/>
</dbReference>
<dbReference type="SUPFAM" id="SSF50331">
    <property type="entry name" value="MOP-like"/>
    <property type="match status" value="1"/>
</dbReference>
<dbReference type="SUPFAM" id="SSF52540">
    <property type="entry name" value="P-loop containing nucleoside triphosphate hydrolases"/>
    <property type="match status" value="1"/>
</dbReference>
<dbReference type="PROSITE" id="PS00211">
    <property type="entry name" value="ABC_TRANSPORTER_1"/>
    <property type="match status" value="1"/>
</dbReference>
<dbReference type="PROSITE" id="PS50893">
    <property type="entry name" value="ABC_TRANSPORTER_2"/>
    <property type="match status" value="1"/>
</dbReference>
<dbReference type="PROSITE" id="PS51315">
    <property type="entry name" value="UGPC"/>
    <property type="match status" value="1"/>
</dbReference>
<evidence type="ECO:0000255" key="1">
    <source>
        <dbReference type="HAMAP-Rule" id="MF_01727"/>
    </source>
</evidence>
<protein>
    <recommendedName>
        <fullName evidence="1">sn-glycerol-3-phosphate import ATP-binding protein UgpC</fullName>
        <ecNumber evidence="1">7.6.2.10</ecNumber>
    </recommendedName>
</protein>
<name>UGPC_YERPN</name>
<sequence length="357" mass="39529">MACLKLQAVTKSYDGVTPVIKQIDLDVADGEFIVMVGPSGCGKSTLLRMVAGLERTTTGDIYIGDQRVTDLEPKDRGIAMVFQNYVLYPHMNVFDNMAYGLKIRGFGKEQIRQRVDEAARILELQPLLKRKPRELSGGQRQRVAMGRAIVREPAVFLFDEPLSNLDAKLRVQMRLELQQLHRRLKTTSLYVTHDQVEAMTLAQRVIVMNKGVAEQIGTPSEVYKRPASLFVASFIGSPAMNLLDGTVSPDGRTFILSDGLTLPLEIPQPQWGGRRLTLGIRPEHIQQTTSAQGVPMNLLTLELLGADNLAHGLWGGQSIIARLSHEEMPVAGSTLHLYLPPAALHFFDTDSGLRIEP</sequence>
<gene>
    <name evidence="1" type="primary">ugpC</name>
    <name type="ordered locus">YPN_0171</name>
    <name type="ORF">YP516_0136</name>
</gene>
<comment type="function">
    <text evidence="1">Part of the ABC transporter complex UgpBAEC involved in sn-glycerol-3-phosphate (G3P) import. Responsible for energy coupling to the transport system.</text>
</comment>
<comment type="catalytic activity">
    <reaction evidence="1">
        <text>sn-glycerol 3-phosphate(out) + ATP + H2O = sn-glycerol 3-phosphate(in) + ADP + phosphate + H(+)</text>
        <dbReference type="Rhea" id="RHEA:21668"/>
        <dbReference type="ChEBI" id="CHEBI:15377"/>
        <dbReference type="ChEBI" id="CHEBI:15378"/>
        <dbReference type="ChEBI" id="CHEBI:30616"/>
        <dbReference type="ChEBI" id="CHEBI:43474"/>
        <dbReference type="ChEBI" id="CHEBI:57597"/>
        <dbReference type="ChEBI" id="CHEBI:456216"/>
        <dbReference type="EC" id="7.6.2.10"/>
    </reaction>
</comment>
<comment type="subunit">
    <text evidence="1">The complex is composed of two ATP-binding proteins (UgpC), two transmembrane proteins (UgpA and UgpE) and a solute-binding protein (UgpB).</text>
</comment>
<comment type="subcellular location">
    <subcellularLocation>
        <location evidence="1">Cell inner membrane</location>
        <topology evidence="1">Peripheral membrane protein</topology>
    </subcellularLocation>
</comment>
<comment type="similarity">
    <text evidence="1">Belongs to the ABC transporter superfamily. sn-glycerol-3-phosphate importer (TC 3.A.1.1.3) family.</text>
</comment>
<keyword id="KW-0067">ATP-binding</keyword>
<keyword id="KW-0997">Cell inner membrane</keyword>
<keyword id="KW-1003">Cell membrane</keyword>
<keyword id="KW-0472">Membrane</keyword>
<keyword id="KW-0547">Nucleotide-binding</keyword>
<keyword id="KW-0762">Sugar transport</keyword>
<keyword id="KW-1278">Translocase</keyword>
<keyword id="KW-0813">Transport</keyword>
<feature type="chain" id="PRO_0000289792" description="sn-glycerol-3-phosphate import ATP-binding protein UgpC">
    <location>
        <begin position="1"/>
        <end position="357"/>
    </location>
</feature>
<feature type="domain" description="ABC transporter" evidence="1">
    <location>
        <begin position="4"/>
        <end position="235"/>
    </location>
</feature>
<feature type="binding site" evidence="1">
    <location>
        <begin position="37"/>
        <end position="44"/>
    </location>
    <ligand>
        <name>ATP</name>
        <dbReference type="ChEBI" id="CHEBI:30616"/>
    </ligand>
</feature>
<proteinExistence type="inferred from homology"/>